<dbReference type="EMBL" id="Y07760">
    <property type="protein sequence ID" value="CAA69061.1"/>
    <property type="molecule type" value="Genomic_DNA"/>
</dbReference>
<dbReference type="RefSeq" id="AP_000054.1">
    <property type="nucleotide sequence ID" value="AC_000003.1"/>
</dbReference>
<dbReference type="SMR" id="P68947"/>
<dbReference type="KEGG" id="vg:1488926"/>
<dbReference type="Proteomes" id="UP000126130">
    <property type="component" value="Segment"/>
</dbReference>
<dbReference type="GO" id="GO:0042025">
    <property type="term" value="C:host cell nucleus"/>
    <property type="evidence" value="ECO:0007669"/>
    <property type="project" value="UniProtKB-SubCell"/>
</dbReference>
<dbReference type="GO" id="GO:0039623">
    <property type="term" value="C:T=25 icosahedral viral capsid"/>
    <property type="evidence" value="ECO:0007669"/>
    <property type="project" value="UniProtKB-UniRule"/>
</dbReference>
<dbReference type="GO" id="GO:0005198">
    <property type="term" value="F:structural molecule activity"/>
    <property type="evidence" value="ECO:0007669"/>
    <property type="project" value="UniProtKB-UniRule"/>
</dbReference>
<dbReference type="GO" id="GO:0075509">
    <property type="term" value="P:endocytosis involved in viral entry into host cell"/>
    <property type="evidence" value="ECO:0007669"/>
    <property type="project" value="UniProtKB-KW"/>
</dbReference>
<dbReference type="GO" id="GO:0019062">
    <property type="term" value="P:virion attachment to host cell"/>
    <property type="evidence" value="ECO:0007669"/>
    <property type="project" value="UniProtKB-UniRule"/>
</dbReference>
<dbReference type="Gene3D" id="3.90.1620.10">
    <property type="entry name" value="adenovirus 2 penton base, domain 2"/>
    <property type="match status" value="1"/>
</dbReference>
<dbReference type="Gene3D" id="2.60.120.550">
    <property type="entry name" value="Penton protein, domain 1"/>
    <property type="match status" value="1"/>
</dbReference>
<dbReference type="HAMAP" id="MF_04052">
    <property type="entry name" value="ADV_CAPSP"/>
    <property type="match status" value="1"/>
</dbReference>
<dbReference type="InterPro" id="IPR002605">
    <property type="entry name" value="Adeno_Penton_B"/>
</dbReference>
<dbReference type="Pfam" id="PF01686">
    <property type="entry name" value="Adeno_Penton_B"/>
    <property type="match status" value="1"/>
</dbReference>
<organismHost>
    <name type="scientific">Canis lupus familiaris</name>
    <name type="common">Dog</name>
    <name type="synonym">Canis familiaris</name>
    <dbReference type="NCBI Taxonomy" id="9615"/>
</organismHost>
<protein>
    <recommendedName>
        <fullName evidence="2">Penton protein</fullName>
        <shortName evidence="2">CP-P</shortName>
    </recommendedName>
    <alternativeName>
        <fullName evidence="2">Penton base protein</fullName>
    </alternativeName>
    <alternativeName>
        <fullName evidence="2">Protein III</fullName>
    </alternativeName>
</protein>
<accession>P68947</accession>
<accession>Q65950</accession>
<evidence type="ECO:0000250" key="1"/>
<evidence type="ECO:0000255" key="2">
    <source>
        <dbReference type="HAMAP-Rule" id="MF_04052"/>
    </source>
</evidence>
<organism>
    <name type="scientific">Canine adenovirus serotype 1 (strain RI261)</name>
    <name type="common">CAdV-1</name>
    <name type="synonym">Canine adenovirus 1 (strain RI261)</name>
    <dbReference type="NCBI Taxonomy" id="69151"/>
    <lineage>
        <taxon>Viruses</taxon>
        <taxon>Varidnaviria</taxon>
        <taxon>Bamfordvirae</taxon>
        <taxon>Preplasmiviricota</taxon>
        <taxon>Tectiliviricetes</taxon>
        <taxon>Rowavirales</taxon>
        <taxon>Adenoviridae</taxon>
        <taxon>Mastadenovirus</taxon>
        <taxon>Canine mastadenovirus A</taxon>
    </lineage>
</organism>
<feature type="chain" id="PRO_0000221877" description="Penton protein">
    <location>
        <begin position="1"/>
        <end position="477"/>
    </location>
</feature>
<keyword id="KW-0167">Capsid protein</keyword>
<keyword id="KW-1048">Host nucleus</keyword>
<keyword id="KW-0945">Host-virus interaction</keyword>
<keyword id="KW-0426">Late protein</keyword>
<keyword id="KW-1148">T=25 icosahedral capsid protein</keyword>
<keyword id="KW-1161">Viral attachment to host cell</keyword>
<keyword id="KW-1162">Viral penetration into host cytoplasm</keyword>
<keyword id="KW-0946">Virion</keyword>
<keyword id="KW-1164">Virus endocytosis by host</keyword>
<keyword id="KW-1160">Virus entry into host cell</keyword>
<name>CAPSP_ADECR</name>
<sequence>MEFPSSPPPSYETVMAQVPSILAPLVPPRYKGATEGRNSIRYSQLPPLFDTTKLYLIDNKSSDIQALNYQNDHSNFLTTVVQNANYTPMEASTQSIQLDERSRWGGDFRSILHMNMPNVTEYMFSNSFKAYLPATADASGKVLTYEWYTLTIPEGNYSEVMLLDLLNNAVVENYLAHGRQHNVKEEDIGLKFDTRNFYLGFDPETELVMPGFYTNEAFHPDIILSPGCAVDFTHSRLNNFLGIRKRLPYQEGFIIKWEDLQGGNIPALLDLEIYNPDTPGDNITPLLQDSKARSYHVGEDPSAGSTFTSYRSWFLAYNYGPVDGIKSKTVLVAPDITCGVEQIYWSLPDMAVDPVTFTSSHNPSSYPVVGTELLPLLPRSFYNGSSVYSQLLQESTAQTHVFNRFPENAILKRPPAPTIISISENVPALSNHGTLPLKNNIPGVQRVTITDARRRVCPYVYKSLGVVVPRVLSSKTF</sequence>
<gene>
    <name evidence="2" type="primary">L2</name>
</gene>
<reference key="1">
    <citation type="journal article" date="1997" name="J. Gen. Virol.">
        <title>Complete DNA sequence of canine adenovirus type 1.</title>
        <authorList>
            <person name="Morrison M.D."/>
            <person name="Onions D.E."/>
            <person name="Nicolson L."/>
        </authorList>
    </citation>
    <scope>NUCLEOTIDE SEQUENCE [LARGE SCALE GENOMIC DNA]</scope>
</reference>
<comment type="function">
    <text evidence="2">Major capsid protein that self-associates to form penton base pentamers, each in the shape of a pentagon, situated at the 12 vertices of the pseudo T=25 capsid. Involved in virus secondary attachment to host cell after initial attachment by the fiber protein, and in endocytosis of virions. As the virus enters the host cell, penton proteins are shed concomitant with virion acidification in the endosome.</text>
</comment>
<comment type="subunit">
    <text evidence="2">Interacts with the fiber protein (via N-terminal tail region). Interacts with the capsid vertex protein; this interaction binds the penton base to neighboring peripentonal hexons.</text>
</comment>
<comment type="subcellular location">
    <subcellularLocation>
        <location evidence="2">Virion</location>
    </subcellularLocation>
    <subcellularLocation>
        <location evidence="2">Host nucleus</location>
    </subcellularLocation>
    <text evidence="2">Located at each vertex of the virion.</text>
</comment>
<comment type="induction">
    <text evidence="2">Expressed in the late phase of the viral replicative cycle.</text>
</comment>
<comment type="miscellaneous">
    <text evidence="1">All late proteins expressed from the major late promoter are produced by alternative splicing and alternative polyadenylation of the same gene giving rise to non-overlapping ORFs. A leader sequence is present in the N-terminus of all these mRNAs and is recognized by the viral shutoff protein to provide expression although conventional translation via ribosome scanning from the cap has been shut off in the host cell (By similarity).</text>
</comment>
<comment type="miscellaneous">
    <text evidence="2">All late proteins expressed from the major late promoter are produced by alternative splicing and alternative polyadenylation of the same gene giving rise to non-overlapping ORFs. A leader sequence is present in the N-terminus of all these mRNAs and is recognized by the viral shutoff protein to provide expression although conventional translation via ribosome scanning from the cap has been shut off in the host cell.</text>
</comment>
<comment type="similarity">
    <text evidence="2">Belongs to the adenoviridae penton family.</text>
</comment>
<proteinExistence type="inferred from homology"/>